<proteinExistence type="evidence at protein level"/>
<name>THAA_DANRE</name>
<feature type="chain" id="PRO_0000053433" description="Thyroid hormone receptor alpha-A">
    <location>
        <begin position="1"/>
        <end position="427"/>
    </location>
</feature>
<feature type="domain" description="NR LBD" evidence="3">
    <location>
        <begin position="167"/>
        <end position="410"/>
    </location>
</feature>
<feature type="DNA-binding region" description="Nuclear receptor" evidence="2">
    <location>
        <begin position="57"/>
        <end position="131"/>
    </location>
</feature>
<feature type="zinc finger region" description="NR C4-type" evidence="2">
    <location>
        <begin position="57"/>
        <end position="77"/>
    </location>
</feature>
<feature type="zinc finger region" description="NR C4-type" evidence="2">
    <location>
        <begin position="95"/>
        <end position="119"/>
    </location>
</feature>
<feature type="region of interest" description="Modulating">
    <location>
        <begin position="1"/>
        <end position="56"/>
    </location>
</feature>
<feature type="region of interest" description="Disordered" evidence="4">
    <location>
        <begin position="1"/>
        <end position="40"/>
    </location>
</feature>
<feature type="compositionally biased region" description="Basic and acidic residues" evidence="4">
    <location>
        <begin position="1"/>
        <end position="11"/>
    </location>
</feature>
<feature type="compositionally biased region" description="Polar residues" evidence="4">
    <location>
        <begin position="29"/>
        <end position="40"/>
    </location>
</feature>
<feature type="splice variant" id="VSP_036323" description="In isoform 2." evidence="7">
    <original>GSTGVAAQEDGSCLR</original>
    <variation>V</variation>
    <location>
        <begin position="413"/>
        <end position="427"/>
    </location>
</feature>
<sequence>MENTEQEHNLPEGDETQWPNGVKRKRKNSQCSMNSTSDKSISVPGYVPSYLEKDEPCVVCGDKATGYHYRCITCEGCKGFFRRTIQKNLHPSYSCKYDSCCIIDKITRNQCQLCRFRKCISVGMAMDLVLDDSKRVAKRRLIEENREKRKKEEIVKTLHNRPEPTVSEWELIRMVTEAHRHTNAQGPHWKQKRKFLPEDIGQSPAPTSDNDKVDLEAFSEFTKIITPAITRVVDFAKKLPMFSELPCEDQIILLKGCCMEIMSLRAAVRYDPESETLTLSGEMAVSREQLKNGGLGVVSDAIFDLGKSLSQFNLDDSEVALLQAVLLMSSDRSGLTCVEKIEKCQEMYLLAFEHYINHRKHNISHFWPKLLMKVTNLRMIGACHASRFLHMKVECPTELFPPLFLEVFEDQEGSTGVAAQEDGSCLR</sequence>
<gene>
    <name type="primary">thraa</name>
    <name type="synonym">nr1a1a</name>
    <name type="synonym">thra</name>
    <name type="synonym">thraa1</name>
    <name type="synonym">tra1</name>
</gene>
<organism>
    <name type="scientific">Danio rerio</name>
    <name type="common">Zebrafish</name>
    <name type="synonym">Brachydanio rerio</name>
    <dbReference type="NCBI Taxonomy" id="7955"/>
    <lineage>
        <taxon>Eukaryota</taxon>
        <taxon>Metazoa</taxon>
        <taxon>Chordata</taxon>
        <taxon>Craniata</taxon>
        <taxon>Vertebrata</taxon>
        <taxon>Euteleostomi</taxon>
        <taxon>Actinopterygii</taxon>
        <taxon>Neopterygii</taxon>
        <taxon>Teleostei</taxon>
        <taxon>Ostariophysi</taxon>
        <taxon>Cypriniformes</taxon>
        <taxon>Danionidae</taxon>
        <taxon>Danioninae</taxon>
        <taxon>Danio</taxon>
    </lineage>
</organism>
<evidence type="ECO:0000250" key="1"/>
<evidence type="ECO:0000255" key="2">
    <source>
        <dbReference type="PROSITE-ProRule" id="PRU00407"/>
    </source>
</evidence>
<evidence type="ECO:0000255" key="3">
    <source>
        <dbReference type="PROSITE-ProRule" id="PRU01189"/>
    </source>
</evidence>
<evidence type="ECO:0000256" key="4">
    <source>
        <dbReference type="SAM" id="MobiDB-lite"/>
    </source>
</evidence>
<evidence type="ECO:0000269" key="5">
    <source>
    </source>
</evidence>
<evidence type="ECO:0000269" key="6">
    <source>
    </source>
</evidence>
<evidence type="ECO:0000303" key="7">
    <source>
    </source>
</evidence>
<evidence type="ECO:0000305" key="8"/>
<protein>
    <recommendedName>
        <fullName>Thyroid hormone receptor alpha-A</fullName>
        <shortName>zTRalpha-A</shortName>
    </recommendedName>
    <alternativeName>
        <fullName>Nuclear receptor subfamily 1 group A member 1-A</fullName>
    </alternativeName>
    <alternativeName>
        <fullName>Thyroid hormone receptor alpha-1</fullName>
        <shortName>TRalpha-1</shortName>
    </alternativeName>
</protein>
<dbReference type="EMBL" id="U54796">
    <property type="protein sequence ID" value="AAA99811.1"/>
    <property type="molecule type" value="mRNA"/>
</dbReference>
<dbReference type="EMBL" id="AL590145">
    <property type="status" value="NOT_ANNOTATED_CDS"/>
    <property type="molecule type" value="Genomic_DNA"/>
</dbReference>
<dbReference type="EMBL" id="BC096778">
    <property type="protein sequence ID" value="AAH96778.1"/>
    <property type="molecule type" value="mRNA"/>
</dbReference>
<dbReference type="EMBL" id="DQ991961">
    <property type="protein sequence ID" value="ABK64188.1"/>
    <property type="molecule type" value="mRNA"/>
</dbReference>
<dbReference type="RefSeq" id="NP_571471.1">
    <molecule id="Q98867-1"/>
    <property type="nucleotide sequence ID" value="NM_131396.1"/>
</dbReference>
<dbReference type="RefSeq" id="XP_005164043.1">
    <property type="nucleotide sequence ID" value="XM_005163986.3"/>
</dbReference>
<dbReference type="RefSeq" id="XP_009297789.1">
    <property type="nucleotide sequence ID" value="XM_009299514.2"/>
</dbReference>
<dbReference type="RefSeq" id="XP_068071844.1">
    <molecule id="Q98867-1"/>
    <property type="nucleotide sequence ID" value="XM_068215743.1"/>
</dbReference>
<dbReference type="SMR" id="Q98867"/>
<dbReference type="FunCoup" id="Q98867">
    <property type="interactions" value="1"/>
</dbReference>
<dbReference type="STRING" id="7955.ENSDARP00000000160"/>
<dbReference type="PaxDb" id="7955-ENSDARP00000000160"/>
<dbReference type="Ensembl" id="ENSDART00000000160">
    <molecule id="Q98867-1"/>
    <property type="protein sequence ID" value="ENSDARP00000000160"/>
    <property type="gene ID" value="ENSDARG00000000151"/>
</dbReference>
<dbReference type="Ensembl" id="ENSDART00000177021">
    <molecule id="Q98867-1"/>
    <property type="protein sequence ID" value="ENSDARP00000143608"/>
    <property type="gene ID" value="ENSDARG00000000151"/>
</dbReference>
<dbReference type="GeneID" id="30670"/>
<dbReference type="KEGG" id="dre:30670"/>
<dbReference type="AGR" id="ZFIN:ZDB-GENE-990415-263"/>
<dbReference type="CTD" id="30670"/>
<dbReference type="ZFIN" id="ZDB-GENE-990415-263">
    <property type="gene designation" value="thraa"/>
</dbReference>
<dbReference type="eggNOG" id="KOG3575">
    <property type="taxonomic scope" value="Eukaryota"/>
</dbReference>
<dbReference type="InParanoid" id="Q98867"/>
<dbReference type="OMA" id="LQSCRRN"/>
<dbReference type="OrthoDB" id="6081310at2759"/>
<dbReference type="PhylomeDB" id="Q98867"/>
<dbReference type="TreeFam" id="TF328382"/>
<dbReference type="PRO" id="PR:Q98867"/>
<dbReference type="Proteomes" id="UP000000437">
    <property type="component" value="Chromosome 3"/>
</dbReference>
<dbReference type="Bgee" id="ENSDARG00000000151">
    <property type="expression patterns" value="Expressed in spleen and 43 other cell types or tissues"/>
</dbReference>
<dbReference type="ExpressionAtlas" id="Q98867">
    <property type="expression patterns" value="baseline and differential"/>
</dbReference>
<dbReference type="GO" id="GO:0005634">
    <property type="term" value="C:nucleus"/>
    <property type="evidence" value="ECO:0000314"/>
    <property type="project" value="UniProtKB"/>
</dbReference>
<dbReference type="GO" id="GO:0090575">
    <property type="term" value="C:RNA polymerase II transcription regulator complex"/>
    <property type="evidence" value="ECO:0000318"/>
    <property type="project" value="GO_Central"/>
</dbReference>
<dbReference type="GO" id="GO:0004879">
    <property type="term" value="F:nuclear receptor activity"/>
    <property type="evidence" value="ECO:0000314"/>
    <property type="project" value="ZFIN"/>
</dbReference>
<dbReference type="GO" id="GO:0000978">
    <property type="term" value="F:RNA polymerase II cis-regulatory region sequence-specific DNA binding"/>
    <property type="evidence" value="ECO:0000318"/>
    <property type="project" value="GO_Central"/>
</dbReference>
<dbReference type="GO" id="GO:0008270">
    <property type="term" value="F:zinc ion binding"/>
    <property type="evidence" value="ECO:0007669"/>
    <property type="project" value="UniProtKB-KW"/>
</dbReference>
<dbReference type="GO" id="GO:0030154">
    <property type="term" value="P:cell differentiation"/>
    <property type="evidence" value="ECO:0000318"/>
    <property type="project" value="GO_Central"/>
</dbReference>
<dbReference type="GO" id="GO:0007507">
    <property type="term" value="P:heart development"/>
    <property type="evidence" value="ECO:0000315"/>
    <property type="project" value="ZFIN"/>
</dbReference>
<dbReference type="GO" id="GO:0045892">
    <property type="term" value="P:negative regulation of DNA-templated transcription"/>
    <property type="evidence" value="ECO:0000314"/>
    <property type="project" value="UniProtKB"/>
</dbReference>
<dbReference type="GO" id="GO:0000122">
    <property type="term" value="P:negative regulation of transcription by RNA polymerase II"/>
    <property type="evidence" value="ECO:0000315"/>
    <property type="project" value="UniProtKB"/>
</dbReference>
<dbReference type="GO" id="GO:0014032">
    <property type="term" value="P:neural crest cell development"/>
    <property type="evidence" value="ECO:0000315"/>
    <property type="project" value="ZFIN"/>
</dbReference>
<dbReference type="GO" id="GO:0045893">
    <property type="term" value="P:positive regulation of DNA-templated transcription"/>
    <property type="evidence" value="ECO:0000314"/>
    <property type="project" value="UniProtKB"/>
</dbReference>
<dbReference type="GO" id="GO:0060298">
    <property type="term" value="P:positive regulation of sarcomere organization"/>
    <property type="evidence" value="ECO:0000315"/>
    <property type="project" value="ZFIN"/>
</dbReference>
<dbReference type="GO" id="GO:0045944">
    <property type="term" value="P:positive regulation of transcription by RNA polymerase II"/>
    <property type="evidence" value="ECO:0000315"/>
    <property type="project" value="UniProtKB"/>
</dbReference>
<dbReference type="GO" id="GO:0006355">
    <property type="term" value="P:regulation of DNA-templated transcription"/>
    <property type="evidence" value="ECO:0000314"/>
    <property type="project" value="ZFIN"/>
</dbReference>
<dbReference type="GO" id="GO:0009725">
    <property type="term" value="P:response to hormone"/>
    <property type="evidence" value="ECO:0000314"/>
    <property type="project" value="ZFIN"/>
</dbReference>
<dbReference type="GO" id="GO:0048384">
    <property type="term" value="P:retinoic acid receptor signaling pathway"/>
    <property type="evidence" value="ECO:0000318"/>
    <property type="project" value="GO_Central"/>
</dbReference>
<dbReference type="GO" id="GO:0002154">
    <property type="term" value="P:thyroid hormone receptor signaling pathway"/>
    <property type="evidence" value="ECO:0000315"/>
    <property type="project" value="ZFIN"/>
</dbReference>
<dbReference type="GO" id="GO:0021591">
    <property type="term" value="P:ventricular system development"/>
    <property type="evidence" value="ECO:0000315"/>
    <property type="project" value="ZFIN"/>
</dbReference>
<dbReference type="CDD" id="cd06961">
    <property type="entry name" value="NR_DBD_TR"/>
    <property type="match status" value="1"/>
</dbReference>
<dbReference type="CDD" id="cd06935">
    <property type="entry name" value="NR_LBD_TR"/>
    <property type="match status" value="1"/>
</dbReference>
<dbReference type="FunFam" id="1.10.565.10:FF:000006">
    <property type="entry name" value="Thyroid hormone receptor beta 2"/>
    <property type="match status" value="1"/>
</dbReference>
<dbReference type="FunFam" id="3.30.50.10:FF:000011">
    <property type="entry name" value="Thyroid hormone receptor beta isoform"/>
    <property type="match status" value="1"/>
</dbReference>
<dbReference type="Gene3D" id="3.30.50.10">
    <property type="entry name" value="Erythroid Transcription Factor GATA-1, subunit A"/>
    <property type="match status" value="1"/>
</dbReference>
<dbReference type="Gene3D" id="1.10.565.10">
    <property type="entry name" value="Retinoid X Receptor"/>
    <property type="match status" value="1"/>
</dbReference>
<dbReference type="InterPro" id="IPR035500">
    <property type="entry name" value="NHR-like_dom_sf"/>
</dbReference>
<dbReference type="InterPro" id="IPR000536">
    <property type="entry name" value="Nucl_hrmn_rcpt_lig-bd"/>
</dbReference>
<dbReference type="InterPro" id="IPR050234">
    <property type="entry name" value="Nuclear_hormone_rcpt_NR1"/>
</dbReference>
<dbReference type="InterPro" id="IPR001723">
    <property type="entry name" value="Nuclear_hrmn_rcpt"/>
</dbReference>
<dbReference type="InterPro" id="IPR001728">
    <property type="entry name" value="ThyrH_rcpt"/>
</dbReference>
<dbReference type="InterPro" id="IPR001628">
    <property type="entry name" value="Znf_hrmn_rcpt"/>
</dbReference>
<dbReference type="InterPro" id="IPR013088">
    <property type="entry name" value="Znf_NHR/GATA"/>
</dbReference>
<dbReference type="PANTHER" id="PTHR24082">
    <property type="entry name" value="NUCLEAR HORMONE RECEPTOR"/>
    <property type="match status" value="1"/>
</dbReference>
<dbReference type="PANTHER" id="PTHR24082:SF42">
    <property type="entry name" value="THYROID HORMONE RECEPTOR ALPHA"/>
    <property type="match status" value="1"/>
</dbReference>
<dbReference type="Pfam" id="PF00104">
    <property type="entry name" value="Hormone_recep"/>
    <property type="match status" value="1"/>
</dbReference>
<dbReference type="Pfam" id="PF00105">
    <property type="entry name" value="zf-C4"/>
    <property type="match status" value="1"/>
</dbReference>
<dbReference type="PRINTS" id="PR00398">
    <property type="entry name" value="STRDHORMONER"/>
</dbReference>
<dbReference type="PRINTS" id="PR00047">
    <property type="entry name" value="STROIDFINGER"/>
</dbReference>
<dbReference type="PRINTS" id="PR00546">
    <property type="entry name" value="THYROIDHORMR"/>
</dbReference>
<dbReference type="SMART" id="SM00430">
    <property type="entry name" value="HOLI"/>
    <property type="match status" value="1"/>
</dbReference>
<dbReference type="SMART" id="SM00399">
    <property type="entry name" value="ZnF_C4"/>
    <property type="match status" value="1"/>
</dbReference>
<dbReference type="SUPFAM" id="SSF57716">
    <property type="entry name" value="Glucocorticoid receptor-like (DNA-binding domain)"/>
    <property type="match status" value="1"/>
</dbReference>
<dbReference type="SUPFAM" id="SSF48508">
    <property type="entry name" value="Nuclear receptor ligand-binding domain"/>
    <property type="match status" value="1"/>
</dbReference>
<dbReference type="PROSITE" id="PS51843">
    <property type="entry name" value="NR_LBD"/>
    <property type="match status" value="1"/>
</dbReference>
<dbReference type="PROSITE" id="PS00031">
    <property type="entry name" value="NUCLEAR_REC_DBD_1"/>
    <property type="match status" value="1"/>
</dbReference>
<dbReference type="PROSITE" id="PS51030">
    <property type="entry name" value="NUCLEAR_REC_DBD_2"/>
    <property type="match status" value="1"/>
</dbReference>
<reference key="1">
    <citation type="journal article" date="1997" name="Differentiation">
        <title>The zebrafish thyroid hormone receptor alpha 1 is expressed during early embryogenesis and can function in transcriptional repression.</title>
        <authorList>
            <person name="Essner J.J."/>
            <person name="Breuer J.J."/>
            <person name="Essner R.D."/>
            <person name="Fahrenkrug S.C."/>
            <person name="Hackett P.B. Jr."/>
        </authorList>
    </citation>
    <scope>NUCLEOTIDE SEQUENCE [MRNA] (ISOFORM 1)</scope>
    <scope>FUNCTION</scope>
    <scope>SUBCELLULAR LOCATION</scope>
    <scope>TISSUE SPECIFICITY</scope>
    <scope>DEVELOPMENTAL STAGE</scope>
    <source>
        <tissue>Blastula</tissue>
    </source>
</reference>
<reference key="2">
    <citation type="journal article" date="2013" name="Nature">
        <title>The zebrafish reference genome sequence and its relationship to the human genome.</title>
        <authorList>
            <person name="Howe K."/>
            <person name="Clark M.D."/>
            <person name="Torroja C.F."/>
            <person name="Torrance J."/>
            <person name="Berthelot C."/>
            <person name="Muffato M."/>
            <person name="Collins J.E."/>
            <person name="Humphray S."/>
            <person name="McLaren K."/>
            <person name="Matthews L."/>
            <person name="McLaren S."/>
            <person name="Sealy I."/>
            <person name="Caccamo M."/>
            <person name="Churcher C."/>
            <person name="Scott C."/>
            <person name="Barrett J.C."/>
            <person name="Koch R."/>
            <person name="Rauch G.J."/>
            <person name="White S."/>
            <person name="Chow W."/>
            <person name="Kilian B."/>
            <person name="Quintais L.T."/>
            <person name="Guerra-Assuncao J.A."/>
            <person name="Zhou Y."/>
            <person name="Gu Y."/>
            <person name="Yen J."/>
            <person name="Vogel J.H."/>
            <person name="Eyre T."/>
            <person name="Redmond S."/>
            <person name="Banerjee R."/>
            <person name="Chi J."/>
            <person name="Fu B."/>
            <person name="Langley E."/>
            <person name="Maguire S.F."/>
            <person name="Laird G.K."/>
            <person name="Lloyd D."/>
            <person name="Kenyon E."/>
            <person name="Donaldson S."/>
            <person name="Sehra H."/>
            <person name="Almeida-King J."/>
            <person name="Loveland J."/>
            <person name="Trevanion S."/>
            <person name="Jones M."/>
            <person name="Quail M."/>
            <person name="Willey D."/>
            <person name="Hunt A."/>
            <person name="Burton J."/>
            <person name="Sims S."/>
            <person name="McLay K."/>
            <person name="Plumb B."/>
            <person name="Davis J."/>
            <person name="Clee C."/>
            <person name="Oliver K."/>
            <person name="Clark R."/>
            <person name="Riddle C."/>
            <person name="Elliot D."/>
            <person name="Threadgold G."/>
            <person name="Harden G."/>
            <person name="Ware D."/>
            <person name="Begum S."/>
            <person name="Mortimore B."/>
            <person name="Kerry G."/>
            <person name="Heath P."/>
            <person name="Phillimore B."/>
            <person name="Tracey A."/>
            <person name="Corby N."/>
            <person name="Dunn M."/>
            <person name="Johnson C."/>
            <person name="Wood J."/>
            <person name="Clark S."/>
            <person name="Pelan S."/>
            <person name="Griffiths G."/>
            <person name="Smith M."/>
            <person name="Glithero R."/>
            <person name="Howden P."/>
            <person name="Barker N."/>
            <person name="Lloyd C."/>
            <person name="Stevens C."/>
            <person name="Harley J."/>
            <person name="Holt K."/>
            <person name="Panagiotidis G."/>
            <person name="Lovell J."/>
            <person name="Beasley H."/>
            <person name="Henderson C."/>
            <person name="Gordon D."/>
            <person name="Auger K."/>
            <person name="Wright D."/>
            <person name="Collins J."/>
            <person name="Raisen C."/>
            <person name="Dyer L."/>
            <person name="Leung K."/>
            <person name="Robertson L."/>
            <person name="Ambridge K."/>
            <person name="Leongamornlert D."/>
            <person name="McGuire S."/>
            <person name="Gilderthorp R."/>
            <person name="Griffiths C."/>
            <person name="Manthravadi D."/>
            <person name="Nichol S."/>
            <person name="Barker G."/>
            <person name="Whitehead S."/>
            <person name="Kay M."/>
            <person name="Brown J."/>
            <person name="Murnane C."/>
            <person name="Gray E."/>
            <person name="Humphries M."/>
            <person name="Sycamore N."/>
            <person name="Barker D."/>
            <person name="Saunders D."/>
            <person name="Wallis J."/>
            <person name="Babbage A."/>
            <person name="Hammond S."/>
            <person name="Mashreghi-Mohammadi M."/>
            <person name="Barr L."/>
            <person name="Martin S."/>
            <person name="Wray P."/>
            <person name="Ellington A."/>
            <person name="Matthews N."/>
            <person name="Ellwood M."/>
            <person name="Woodmansey R."/>
            <person name="Clark G."/>
            <person name="Cooper J."/>
            <person name="Tromans A."/>
            <person name="Grafham D."/>
            <person name="Skuce C."/>
            <person name="Pandian R."/>
            <person name="Andrews R."/>
            <person name="Harrison E."/>
            <person name="Kimberley A."/>
            <person name="Garnett J."/>
            <person name="Fosker N."/>
            <person name="Hall R."/>
            <person name="Garner P."/>
            <person name="Kelly D."/>
            <person name="Bird C."/>
            <person name="Palmer S."/>
            <person name="Gehring I."/>
            <person name="Berger A."/>
            <person name="Dooley C.M."/>
            <person name="Ersan-Urun Z."/>
            <person name="Eser C."/>
            <person name="Geiger H."/>
            <person name="Geisler M."/>
            <person name="Karotki L."/>
            <person name="Kirn A."/>
            <person name="Konantz J."/>
            <person name="Konantz M."/>
            <person name="Oberlander M."/>
            <person name="Rudolph-Geiger S."/>
            <person name="Teucke M."/>
            <person name="Lanz C."/>
            <person name="Raddatz G."/>
            <person name="Osoegawa K."/>
            <person name="Zhu B."/>
            <person name="Rapp A."/>
            <person name="Widaa S."/>
            <person name="Langford C."/>
            <person name="Yang F."/>
            <person name="Schuster S.C."/>
            <person name="Carter N.P."/>
            <person name="Harrow J."/>
            <person name="Ning Z."/>
            <person name="Herrero J."/>
            <person name="Searle S.M."/>
            <person name="Enright A."/>
            <person name="Geisler R."/>
            <person name="Plasterk R.H."/>
            <person name="Lee C."/>
            <person name="Westerfield M."/>
            <person name="de Jong P.J."/>
            <person name="Zon L.I."/>
            <person name="Postlethwait J.H."/>
            <person name="Nusslein-Volhard C."/>
            <person name="Hubbard T.J."/>
            <person name="Roest Crollius H."/>
            <person name="Rogers J."/>
            <person name="Stemple D.L."/>
        </authorList>
    </citation>
    <scope>NUCLEOTIDE SEQUENCE [LARGE SCALE GENOMIC DNA]</scope>
    <source>
        <strain>Tuebingen</strain>
    </source>
</reference>
<reference key="3">
    <citation type="submission" date="2005-06" db="EMBL/GenBank/DDBJ databases">
        <authorList>
            <consortium name="NIH - Zebrafish Gene Collection (ZGC) project"/>
        </authorList>
    </citation>
    <scope>NUCLEOTIDE SEQUENCE [LARGE SCALE MRNA] (ISOFORM 1)</scope>
    <source>
        <strain>AB</strain>
    </source>
</reference>
<reference key="4">
    <citation type="journal article" date="2008" name="Gen. Comp. Endocrinol.">
        <title>An F-domain introduced by alternative splicing regulates activity of the zebrafish thyroid hormone receptor alpha.</title>
        <authorList>
            <person name="Takayama S."/>
            <person name="Hostick U."/>
            <person name="Haendel M."/>
            <person name="Eisen J."/>
            <person name="Darimont B."/>
        </authorList>
    </citation>
    <scope>NUCLEOTIDE SEQUENCE [MRNA] OF 224-427 (ISOFORM 2)</scope>
    <scope>FUNCTION</scope>
    <scope>INTERACTION WITH NCOA2</scope>
    <scope>DEVELOPMENTAL STAGE</scope>
    <scope>DOMAIN</scope>
    <scope>ALTERNATIVE SPLICING</scope>
    <source>
        <tissue>Heart</tissue>
    </source>
</reference>
<keyword id="KW-0010">Activator</keyword>
<keyword id="KW-0025">Alternative splicing</keyword>
<keyword id="KW-0217">Developmental protein</keyword>
<keyword id="KW-0238">DNA-binding</keyword>
<keyword id="KW-0479">Metal-binding</keyword>
<keyword id="KW-0539">Nucleus</keyword>
<keyword id="KW-0675">Receptor</keyword>
<keyword id="KW-1185">Reference proteome</keyword>
<keyword id="KW-0678">Repressor</keyword>
<keyword id="KW-0804">Transcription</keyword>
<keyword id="KW-0805">Transcription regulation</keyword>
<keyword id="KW-0862">Zinc</keyword>
<keyword id="KW-0863">Zinc-finger</keyword>
<accession>Q98867</accession>
<accession>A0ST47</accession>
<accession>Q4V9Q5</accession>
<comment type="function">
    <text evidence="1 5 6">High affinity receptor for triiodothyronine (By similarity). In the absence of thyroid hormone during late blastula stage development, acts as a transcriptional repressor. Whereas in the presence of thyroid hormone, can act as an activator of transcription. In addition, represses retinoic acid (RA)-signaling during blastula and gastrula stages of development.</text>
</comment>
<comment type="subunit">
    <text evidence="5">Interacts with ncoa2.</text>
</comment>
<comment type="subcellular location">
    <subcellularLocation>
        <location evidence="2 6">Nucleus</location>
    </subcellularLocation>
</comment>
<comment type="alternative products">
    <event type="alternative splicing"/>
    <isoform>
        <id>Q98867-1</id>
        <name>1</name>
        <name>TRalphaA1</name>
        <sequence type="displayed"/>
    </isoform>
    <isoform>
        <id>Q98867-2</id>
        <name>2</name>
        <name>TRalphaA1-2</name>
        <sequence type="described" ref="VSP_036323"/>
    </isoform>
</comment>
<comment type="tissue specificity">
    <text evidence="6">After the mid-blastula transition (MBT), expressed throughout the deep cells, which give rise to the embryo proper. In adults, isoform 2 shows highest expression in the eye and liver. Expressed in adult gonads.</text>
</comment>
<comment type="developmental stage">
    <text evidence="5 6">Expressed both maternally and zygotically. Most abundant during early oogenesis during stages I and II, and expression levels drop by oocyte maturation. Expressed at the 1-cell stage and then again after the MBT from the blastula to early gastrula (shield) stages, during which expression levels decrease. Not detected after gastrulation until adults.</text>
</comment>
<comment type="domain">
    <text evidence="5">Composed of three domains: a modulating N-terminal domain, a DNA-binding domain and a C-terminal ligand-binding domain.</text>
</comment>
<comment type="domain">
    <text evidence="5">The C-terminal extension present in isoform 1 and absent in isoform 2 (the F-domain) regulates transcriptional activity by altering the selectivity of binding to cofactors.</text>
</comment>
<comment type="similarity">
    <text evidence="8">Belongs to the nuclear hormone receptor family. NR1 subfamily.</text>
</comment>